<reference key="1">
    <citation type="journal article" date="1994" name="Proc. Natl. Acad. Sci. U.S.A.">
        <title>Linkage of mating-type loci distinguishes bipolar from tetrapolar mating in basidiomycetous smut fungi.</title>
        <authorList>
            <person name="Bakkeren G."/>
            <person name="Kronstad J.W."/>
        </authorList>
    </citation>
    <scope>NUCLEOTIDE SEQUENCE [GENOMIC DNA]</scope>
    <source>
        <strain>UH112</strain>
    </source>
</reference>
<comment type="function">
    <text>Receptor for the A2 pheromone, a prenylated mating factor.</text>
</comment>
<comment type="subcellular location">
    <subcellularLocation>
        <location>Membrane</location>
        <topology>Multi-pass membrane protein</topology>
    </subcellularLocation>
</comment>
<comment type="similarity">
    <text evidence="3">Belongs to the G-protein coupled receptor 4 family.</text>
</comment>
<name>PRA1_USTHO</name>
<sequence length="359" mass="40452">MLDHVTPFFALFACILVLFALGWHIRSRNVGTITLSLYLFFGNLDNFVNSVAWWSTAEDKAPGFCEVSIRLRHALYIAIPASNLVIARKLESIASTRQVRASASEHKKSIIIDLLISVGLPVLYVSLMIVNQTNRYGIIEQVGCWPFLSLSWVWVLLVAAPVLIVSFASAVYSVLAFRWFWIRRRQFQAVLASSASTLNKARYIRLLVLTAIDMLLFFPIYVGSVSDTIRGAITTSYVSWSYVHTGFSYIPQFSAEVMEMQPSFKARLILSRLVCPISAYIFFAMFGLGQEARQGYKHAVLKALVFCKLRKERQKPIQNHIVANIEVVTFQSRETSGGIDGSPHSEKFSINTPTKYEEA</sequence>
<gene>
    <name type="primary">PRA1</name>
</gene>
<accession>Q99063</accession>
<organism>
    <name type="scientific">Ustilago hordei</name>
    <name type="common">Barley covered smut fungus</name>
    <dbReference type="NCBI Taxonomy" id="120017"/>
    <lineage>
        <taxon>Eukaryota</taxon>
        <taxon>Fungi</taxon>
        <taxon>Dikarya</taxon>
        <taxon>Basidiomycota</taxon>
        <taxon>Ustilaginomycotina</taxon>
        <taxon>Ustilaginomycetes</taxon>
        <taxon>Ustilaginales</taxon>
        <taxon>Ustilaginaceae</taxon>
        <taxon>Ustilago</taxon>
    </lineage>
</organism>
<evidence type="ECO:0000255" key="1"/>
<evidence type="ECO:0000256" key="2">
    <source>
        <dbReference type="SAM" id="MobiDB-lite"/>
    </source>
</evidence>
<evidence type="ECO:0000305" key="3"/>
<feature type="chain" id="PRO_0000195076" description="Pheromone receptor 1">
    <location>
        <begin position="1"/>
        <end position="359"/>
    </location>
</feature>
<feature type="transmembrane region" description="Helical; Name=1" evidence="1">
    <location>
        <begin position="5"/>
        <end position="25"/>
    </location>
</feature>
<feature type="transmembrane region" description="Helical; Name=2" evidence="1">
    <location>
        <begin position="33"/>
        <end position="53"/>
    </location>
</feature>
<feature type="transmembrane region" description="Helical; Name=3" evidence="1">
    <location>
        <begin position="71"/>
        <end position="87"/>
    </location>
</feature>
<feature type="transmembrane region" description="Helical; Name=4" evidence="1">
    <location>
        <begin position="110"/>
        <end position="130"/>
    </location>
</feature>
<feature type="transmembrane region" description="Helical; Name=5" evidence="1">
    <location>
        <begin position="147"/>
        <end position="167"/>
    </location>
</feature>
<feature type="transmembrane region" description="Helical; Name=6" evidence="1">
    <location>
        <begin position="206"/>
        <end position="226"/>
    </location>
</feature>
<feature type="transmembrane region" description="Helical; Name=7" evidence="1">
    <location>
        <begin position="268"/>
        <end position="288"/>
    </location>
</feature>
<feature type="region of interest" description="Disordered" evidence="2">
    <location>
        <begin position="335"/>
        <end position="359"/>
    </location>
</feature>
<feature type="compositionally biased region" description="Polar residues" evidence="2">
    <location>
        <begin position="348"/>
        <end position="359"/>
    </location>
</feature>
<protein>
    <recommendedName>
        <fullName>Pheromone receptor 1</fullName>
    </recommendedName>
</protein>
<proteinExistence type="inferred from homology"/>
<dbReference type="EMBL" id="U07939">
    <property type="protein sequence ID" value="AAA19965.1"/>
    <property type="molecule type" value="Genomic_DNA"/>
</dbReference>
<dbReference type="PIR" id="A57718">
    <property type="entry name" value="A57718"/>
</dbReference>
<dbReference type="SMR" id="Q99063"/>
<dbReference type="OMA" id="ATTEICC"/>
<dbReference type="GO" id="GO:0005886">
    <property type="term" value="C:plasma membrane"/>
    <property type="evidence" value="ECO:0007669"/>
    <property type="project" value="TreeGrafter"/>
</dbReference>
<dbReference type="GO" id="GO:0004933">
    <property type="term" value="F:mating-type a-factor pheromone receptor activity"/>
    <property type="evidence" value="ECO:0007669"/>
    <property type="project" value="InterPro"/>
</dbReference>
<dbReference type="GO" id="GO:0000750">
    <property type="term" value="P:pheromone-dependent signal transduction involved in conjugation with cellular fusion"/>
    <property type="evidence" value="ECO:0007669"/>
    <property type="project" value="TreeGrafter"/>
</dbReference>
<dbReference type="CDD" id="cd14966">
    <property type="entry name" value="7tmD_STE3"/>
    <property type="match status" value="1"/>
</dbReference>
<dbReference type="Gene3D" id="1.20.1070.10">
    <property type="entry name" value="Rhodopsin 7-helix transmembrane proteins"/>
    <property type="match status" value="1"/>
</dbReference>
<dbReference type="InterPro" id="IPR001546">
    <property type="entry name" value="GPCR_Pheromne_A_rcpt"/>
</dbReference>
<dbReference type="InterPro" id="IPR001499">
    <property type="entry name" value="GPCR_STE3"/>
</dbReference>
<dbReference type="PANTHER" id="PTHR28097">
    <property type="entry name" value="PHEROMONE A FACTOR RECEPTOR"/>
    <property type="match status" value="1"/>
</dbReference>
<dbReference type="PANTHER" id="PTHR28097:SF1">
    <property type="entry name" value="PHEROMONE A FACTOR RECEPTOR"/>
    <property type="match status" value="1"/>
</dbReference>
<dbReference type="Pfam" id="PF02076">
    <property type="entry name" value="STE3"/>
    <property type="match status" value="1"/>
</dbReference>
<dbReference type="PRINTS" id="PR00899">
    <property type="entry name" value="GPCRSTE3"/>
</dbReference>
<dbReference type="PRINTS" id="PR00900">
    <property type="entry name" value="PHEROMONEAR"/>
</dbReference>
<keyword id="KW-0297">G-protein coupled receptor</keyword>
<keyword id="KW-0472">Membrane</keyword>
<keyword id="KW-0589">Pheromone response</keyword>
<keyword id="KW-0675">Receptor</keyword>
<keyword id="KW-0807">Transducer</keyword>
<keyword id="KW-0812">Transmembrane</keyword>
<keyword id="KW-1133">Transmembrane helix</keyword>